<evidence type="ECO:0000255" key="1">
    <source>
        <dbReference type="HAMAP-Rule" id="MF_01864"/>
    </source>
</evidence>
<evidence type="ECO:0000255" key="2">
    <source>
        <dbReference type="PROSITE-ProRule" id="PRU01266"/>
    </source>
</evidence>
<proteinExistence type="inferred from homology"/>
<name>MIAB_CLOB8</name>
<keyword id="KW-0004">4Fe-4S</keyword>
<keyword id="KW-0963">Cytoplasm</keyword>
<keyword id="KW-0408">Iron</keyword>
<keyword id="KW-0411">Iron-sulfur</keyword>
<keyword id="KW-0479">Metal-binding</keyword>
<keyword id="KW-0949">S-adenosyl-L-methionine</keyword>
<keyword id="KW-0808">Transferase</keyword>
<keyword id="KW-0819">tRNA processing</keyword>
<reference key="1">
    <citation type="submission" date="2007-06" db="EMBL/GenBank/DDBJ databases">
        <title>Complete sequence of Clostridium beijerinckii NCIMB 8052.</title>
        <authorList>
            <consortium name="US DOE Joint Genome Institute"/>
            <person name="Copeland A."/>
            <person name="Lucas S."/>
            <person name="Lapidus A."/>
            <person name="Barry K."/>
            <person name="Detter J.C."/>
            <person name="Glavina del Rio T."/>
            <person name="Hammon N."/>
            <person name="Israni S."/>
            <person name="Dalin E."/>
            <person name="Tice H."/>
            <person name="Pitluck S."/>
            <person name="Sims D."/>
            <person name="Brettin T."/>
            <person name="Bruce D."/>
            <person name="Tapia R."/>
            <person name="Brainard J."/>
            <person name="Schmutz J."/>
            <person name="Larimer F."/>
            <person name="Land M."/>
            <person name="Hauser L."/>
            <person name="Kyrpides N."/>
            <person name="Mikhailova N."/>
            <person name="Bennet G."/>
            <person name="Cann I."/>
            <person name="Chen J.-S."/>
            <person name="Contreras A.L."/>
            <person name="Jones D."/>
            <person name="Kashket E."/>
            <person name="Mitchell W."/>
            <person name="Stoddard S."/>
            <person name="Schwarz W."/>
            <person name="Qureshi N."/>
            <person name="Young M."/>
            <person name="Shi Z."/>
            <person name="Ezeji T."/>
            <person name="White B."/>
            <person name="Blaschek H."/>
            <person name="Richardson P."/>
        </authorList>
    </citation>
    <scope>NUCLEOTIDE SEQUENCE [LARGE SCALE GENOMIC DNA]</scope>
    <source>
        <strain>ATCC 51743 / NCIMB 8052</strain>
    </source>
</reference>
<accession>A6LWI1</accession>
<comment type="function">
    <text evidence="1">Catalyzes the methylthiolation of N6-(dimethylallyl)adenosine (i(6)A), leading to the formation of 2-methylthio-N6-(dimethylallyl)adenosine (ms(2)i(6)A) at position 37 in tRNAs that read codons beginning with uridine.</text>
</comment>
<comment type="catalytic activity">
    <reaction evidence="1">
        <text>N(6)-dimethylallyladenosine(37) in tRNA + (sulfur carrier)-SH + AH2 + 2 S-adenosyl-L-methionine = 2-methylsulfanyl-N(6)-dimethylallyladenosine(37) in tRNA + (sulfur carrier)-H + 5'-deoxyadenosine + L-methionine + A + S-adenosyl-L-homocysteine + 2 H(+)</text>
        <dbReference type="Rhea" id="RHEA:37067"/>
        <dbReference type="Rhea" id="RHEA-COMP:10375"/>
        <dbReference type="Rhea" id="RHEA-COMP:10376"/>
        <dbReference type="Rhea" id="RHEA-COMP:14737"/>
        <dbReference type="Rhea" id="RHEA-COMP:14739"/>
        <dbReference type="ChEBI" id="CHEBI:13193"/>
        <dbReference type="ChEBI" id="CHEBI:15378"/>
        <dbReference type="ChEBI" id="CHEBI:17319"/>
        <dbReference type="ChEBI" id="CHEBI:17499"/>
        <dbReference type="ChEBI" id="CHEBI:29917"/>
        <dbReference type="ChEBI" id="CHEBI:57844"/>
        <dbReference type="ChEBI" id="CHEBI:57856"/>
        <dbReference type="ChEBI" id="CHEBI:59789"/>
        <dbReference type="ChEBI" id="CHEBI:64428"/>
        <dbReference type="ChEBI" id="CHEBI:74415"/>
        <dbReference type="ChEBI" id="CHEBI:74417"/>
        <dbReference type="EC" id="2.8.4.3"/>
    </reaction>
</comment>
<comment type="cofactor">
    <cofactor evidence="1">
        <name>[4Fe-4S] cluster</name>
        <dbReference type="ChEBI" id="CHEBI:49883"/>
    </cofactor>
    <text evidence="1">Binds 2 [4Fe-4S] clusters. One cluster is coordinated with 3 cysteines and an exchangeable S-adenosyl-L-methionine.</text>
</comment>
<comment type="subunit">
    <text evidence="1">Monomer.</text>
</comment>
<comment type="subcellular location">
    <subcellularLocation>
        <location evidence="1">Cytoplasm</location>
    </subcellularLocation>
</comment>
<comment type="similarity">
    <text evidence="1">Belongs to the methylthiotransferase family. MiaB subfamily.</text>
</comment>
<protein>
    <recommendedName>
        <fullName evidence="1">tRNA-2-methylthio-N(6)-dimethylallyladenosine synthase</fullName>
        <ecNumber evidence="1">2.8.4.3</ecNumber>
    </recommendedName>
    <alternativeName>
        <fullName evidence="1">(Dimethylallyl)adenosine tRNA methylthiotransferase MiaB</fullName>
    </alternativeName>
    <alternativeName>
        <fullName evidence="1">tRNA-i(6)A37 methylthiotransferase</fullName>
    </alternativeName>
</protein>
<feature type="chain" id="PRO_0000374220" description="tRNA-2-methylthio-N(6)-dimethylallyladenosine synthase">
    <location>
        <begin position="1"/>
        <end position="455"/>
    </location>
</feature>
<feature type="domain" description="MTTase N-terminal" evidence="1">
    <location>
        <begin position="18"/>
        <end position="136"/>
    </location>
</feature>
<feature type="domain" description="Radical SAM core" evidence="2">
    <location>
        <begin position="159"/>
        <end position="389"/>
    </location>
</feature>
<feature type="domain" description="TRAM" evidence="1">
    <location>
        <begin position="392"/>
        <end position="455"/>
    </location>
</feature>
<feature type="binding site" evidence="1">
    <location>
        <position position="27"/>
    </location>
    <ligand>
        <name>[4Fe-4S] cluster</name>
        <dbReference type="ChEBI" id="CHEBI:49883"/>
        <label>1</label>
    </ligand>
</feature>
<feature type="binding site" evidence="1">
    <location>
        <position position="63"/>
    </location>
    <ligand>
        <name>[4Fe-4S] cluster</name>
        <dbReference type="ChEBI" id="CHEBI:49883"/>
        <label>1</label>
    </ligand>
</feature>
<feature type="binding site" evidence="1">
    <location>
        <position position="97"/>
    </location>
    <ligand>
        <name>[4Fe-4S] cluster</name>
        <dbReference type="ChEBI" id="CHEBI:49883"/>
        <label>1</label>
    </ligand>
</feature>
<feature type="binding site" evidence="1">
    <location>
        <position position="173"/>
    </location>
    <ligand>
        <name>[4Fe-4S] cluster</name>
        <dbReference type="ChEBI" id="CHEBI:49883"/>
        <label>2</label>
        <note>4Fe-4S-S-AdoMet</note>
    </ligand>
</feature>
<feature type="binding site" evidence="1">
    <location>
        <position position="177"/>
    </location>
    <ligand>
        <name>[4Fe-4S] cluster</name>
        <dbReference type="ChEBI" id="CHEBI:49883"/>
        <label>2</label>
        <note>4Fe-4S-S-AdoMet</note>
    </ligand>
</feature>
<feature type="binding site" evidence="1">
    <location>
        <position position="180"/>
    </location>
    <ligand>
        <name>[4Fe-4S] cluster</name>
        <dbReference type="ChEBI" id="CHEBI:49883"/>
        <label>2</label>
        <note>4Fe-4S-S-AdoMet</note>
    </ligand>
</feature>
<sequence>MNFDIEKLDSQMASDEKKLFFIQTYGCQMNEEDSEKLSGMLKRMGYENTENRDEASIIIFNTCCVRENAENKVFGNLGALKKQKEKNPDLVIGICGCMMQQKGMADDILKRFPYVNIIFGTHNSYKFPEYLNRVKTEGVQIKEIIDKETEIVEGIPIDRKSDIKGFVTIMYGCNNFCTYCIVPYVRGRERSRKPEDIVNEIKDMVTRGYKEVTLLGQNVNSYGKGLEENITFADLLRKVNEIEGLERIRFMTSHPKDLTLDVVYAIRDCDKVCEQIHLPVQSGSDRILKEMNRHYTKEQYITLAKKIRAEIPDVTFSTDIIVGFPGETEEDFSETLELAKEVRYDAAFTFIYSRRNHTPADKMENQIPDEIKHERFNRLVEIVNTGIAKGNKDAEGKIYEVLVEGYSKNDEAKLTGRTRNGRLVNFEGGEDLIGKLVNVKIIKANSFSLIGEVEK</sequence>
<organism>
    <name type="scientific">Clostridium beijerinckii (strain ATCC 51743 / NCIMB 8052)</name>
    <name type="common">Clostridium acetobutylicum</name>
    <dbReference type="NCBI Taxonomy" id="290402"/>
    <lineage>
        <taxon>Bacteria</taxon>
        <taxon>Bacillati</taxon>
        <taxon>Bacillota</taxon>
        <taxon>Clostridia</taxon>
        <taxon>Eubacteriales</taxon>
        <taxon>Clostridiaceae</taxon>
        <taxon>Clostridium</taxon>
    </lineage>
</organism>
<dbReference type="EC" id="2.8.4.3" evidence="1"/>
<dbReference type="EMBL" id="CP000721">
    <property type="protein sequence ID" value="ABR34711.1"/>
    <property type="molecule type" value="Genomic_DNA"/>
</dbReference>
<dbReference type="RefSeq" id="WP_012058766.1">
    <property type="nucleotide sequence ID" value="NC_009617.1"/>
</dbReference>
<dbReference type="SMR" id="A6LWI1"/>
<dbReference type="GeneID" id="66345483"/>
<dbReference type="KEGG" id="cbe:Cbei_2555"/>
<dbReference type="eggNOG" id="COG0621">
    <property type="taxonomic scope" value="Bacteria"/>
</dbReference>
<dbReference type="HOGENOM" id="CLU_018697_2_0_9"/>
<dbReference type="Proteomes" id="UP000000565">
    <property type="component" value="Chromosome"/>
</dbReference>
<dbReference type="GO" id="GO:0005829">
    <property type="term" value="C:cytosol"/>
    <property type="evidence" value="ECO:0007669"/>
    <property type="project" value="TreeGrafter"/>
</dbReference>
<dbReference type="GO" id="GO:0051539">
    <property type="term" value="F:4 iron, 4 sulfur cluster binding"/>
    <property type="evidence" value="ECO:0007669"/>
    <property type="project" value="UniProtKB-UniRule"/>
</dbReference>
<dbReference type="GO" id="GO:0046872">
    <property type="term" value="F:metal ion binding"/>
    <property type="evidence" value="ECO:0007669"/>
    <property type="project" value="UniProtKB-KW"/>
</dbReference>
<dbReference type="GO" id="GO:0035597">
    <property type="term" value="F:N6-isopentenyladenosine methylthiotransferase activity"/>
    <property type="evidence" value="ECO:0007669"/>
    <property type="project" value="TreeGrafter"/>
</dbReference>
<dbReference type="CDD" id="cd01335">
    <property type="entry name" value="Radical_SAM"/>
    <property type="match status" value="1"/>
</dbReference>
<dbReference type="FunFam" id="3.40.50.12160:FF:000006">
    <property type="entry name" value="tRNA-2-methylthio-N(6)-dimethylallyladenosine synthase"/>
    <property type="match status" value="1"/>
</dbReference>
<dbReference type="FunFam" id="3.80.30.20:FF:000001">
    <property type="entry name" value="tRNA-2-methylthio-N(6)-dimethylallyladenosine synthase 2"/>
    <property type="match status" value="1"/>
</dbReference>
<dbReference type="Gene3D" id="3.40.50.12160">
    <property type="entry name" value="Methylthiotransferase, N-terminal domain"/>
    <property type="match status" value="1"/>
</dbReference>
<dbReference type="Gene3D" id="3.80.30.20">
    <property type="entry name" value="tm_1862 like domain"/>
    <property type="match status" value="1"/>
</dbReference>
<dbReference type="HAMAP" id="MF_01864">
    <property type="entry name" value="tRNA_metthiotr_MiaB"/>
    <property type="match status" value="1"/>
</dbReference>
<dbReference type="InterPro" id="IPR006638">
    <property type="entry name" value="Elp3/MiaA/NifB-like_rSAM"/>
</dbReference>
<dbReference type="InterPro" id="IPR005839">
    <property type="entry name" value="Methylthiotransferase"/>
</dbReference>
<dbReference type="InterPro" id="IPR020612">
    <property type="entry name" value="Methylthiotransferase_CS"/>
</dbReference>
<dbReference type="InterPro" id="IPR013848">
    <property type="entry name" value="Methylthiotransferase_N"/>
</dbReference>
<dbReference type="InterPro" id="IPR038135">
    <property type="entry name" value="Methylthiotransferase_N_sf"/>
</dbReference>
<dbReference type="InterPro" id="IPR006463">
    <property type="entry name" value="MiaB_methiolase"/>
</dbReference>
<dbReference type="InterPro" id="IPR007197">
    <property type="entry name" value="rSAM"/>
</dbReference>
<dbReference type="InterPro" id="IPR023404">
    <property type="entry name" value="rSAM_horseshoe"/>
</dbReference>
<dbReference type="InterPro" id="IPR002792">
    <property type="entry name" value="TRAM_dom"/>
</dbReference>
<dbReference type="NCBIfam" id="TIGR01574">
    <property type="entry name" value="miaB-methiolase"/>
    <property type="match status" value="1"/>
</dbReference>
<dbReference type="NCBIfam" id="TIGR00089">
    <property type="entry name" value="MiaB/RimO family radical SAM methylthiotransferase"/>
    <property type="match status" value="1"/>
</dbReference>
<dbReference type="PANTHER" id="PTHR43020">
    <property type="entry name" value="CDK5 REGULATORY SUBUNIT-ASSOCIATED PROTEIN 1"/>
    <property type="match status" value="1"/>
</dbReference>
<dbReference type="PANTHER" id="PTHR43020:SF2">
    <property type="entry name" value="MITOCHONDRIAL TRNA METHYLTHIOTRANSFERASE CDK5RAP1"/>
    <property type="match status" value="1"/>
</dbReference>
<dbReference type="Pfam" id="PF04055">
    <property type="entry name" value="Radical_SAM"/>
    <property type="match status" value="1"/>
</dbReference>
<dbReference type="Pfam" id="PF01938">
    <property type="entry name" value="TRAM"/>
    <property type="match status" value="1"/>
</dbReference>
<dbReference type="Pfam" id="PF00919">
    <property type="entry name" value="UPF0004"/>
    <property type="match status" value="1"/>
</dbReference>
<dbReference type="SFLD" id="SFLDF00273">
    <property type="entry name" value="(dimethylallyl)adenosine_tRNA"/>
    <property type="match status" value="1"/>
</dbReference>
<dbReference type="SFLD" id="SFLDG01082">
    <property type="entry name" value="B12-binding_domain_containing"/>
    <property type="match status" value="1"/>
</dbReference>
<dbReference type="SFLD" id="SFLDG01061">
    <property type="entry name" value="methylthiotransferase"/>
    <property type="match status" value="1"/>
</dbReference>
<dbReference type="SMART" id="SM00729">
    <property type="entry name" value="Elp3"/>
    <property type="match status" value="1"/>
</dbReference>
<dbReference type="SUPFAM" id="SSF102114">
    <property type="entry name" value="Radical SAM enzymes"/>
    <property type="match status" value="1"/>
</dbReference>
<dbReference type="PROSITE" id="PS51449">
    <property type="entry name" value="MTTASE_N"/>
    <property type="match status" value="1"/>
</dbReference>
<dbReference type="PROSITE" id="PS01278">
    <property type="entry name" value="MTTASE_RADICAL"/>
    <property type="match status" value="1"/>
</dbReference>
<dbReference type="PROSITE" id="PS51918">
    <property type="entry name" value="RADICAL_SAM"/>
    <property type="match status" value="1"/>
</dbReference>
<dbReference type="PROSITE" id="PS50926">
    <property type="entry name" value="TRAM"/>
    <property type="match status" value="1"/>
</dbReference>
<gene>
    <name evidence="1" type="primary">miaB</name>
    <name type="ordered locus">Cbei_2555</name>
</gene>